<gene>
    <name evidence="2" type="primary">SELENOW</name>
</gene>
<proteinExistence type="evidence at protein level"/>
<evidence type="ECO:0000250" key="1"/>
<evidence type="ECO:0000250" key="2">
    <source>
        <dbReference type="UniProtKB" id="P63302"/>
    </source>
</evidence>
<evidence type="ECO:0000269" key="3">
    <source>
    </source>
</evidence>
<evidence type="ECO:0000269" key="4">
    <source>
    </source>
</evidence>
<evidence type="ECO:0000303" key="5">
    <source>
    </source>
</evidence>
<evidence type="ECO:0000305" key="6"/>
<sequence>MALAVRVVYCGAUGYKSKYLQLKKKLEDEFPGRLDICGEGTPQATGFFEVMVAGKLIHSKKKGDGYVDTESKFLKLVAAIKAALAQG</sequence>
<organism>
    <name type="scientific">Macaca mulatta</name>
    <name type="common">Rhesus macaque</name>
    <dbReference type="NCBI Taxonomy" id="9544"/>
    <lineage>
        <taxon>Eukaryota</taxon>
        <taxon>Metazoa</taxon>
        <taxon>Chordata</taxon>
        <taxon>Craniata</taxon>
        <taxon>Vertebrata</taxon>
        <taxon>Euteleostomi</taxon>
        <taxon>Mammalia</taxon>
        <taxon>Eutheria</taxon>
        <taxon>Euarchontoglires</taxon>
        <taxon>Primates</taxon>
        <taxon>Haplorrhini</taxon>
        <taxon>Catarrhini</taxon>
        <taxon>Cercopithecidae</taxon>
        <taxon>Cercopithecinae</taxon>
        <taxon>Macaca</taxon>
    </lineage>
</organism>
<accession>P63303</accession>
<accession>O15532</accession>
<accession>O19096</accession>
<accession>Q86TI9</accession>
<accession>Q96KM5</accession>
<protein>
    <recommendedName>
        <fullName evidence="5">Selenoprotein W</fullName>
        <shortName evidence="2">SelW</shortName>
    </recommendedName>
</protein>
<name>SELW_MACMU</name>
<reference key="1">
    <citation type="journal article" date="1997" name="Gene">
        <title>Conserved features of selenocysteine insertion sequence (SECIS) elements in selenoprotein W cDNAs from five species.</title>
        <authorList>
            <person name="Gu Q.-P."/>
            <person name="Beilstein M.A."/>
            <person name="Vendeland S.C."/>
            <person name="Lugade A."/>
            <person name="Ream W."/>
            <person name="Whanger P.D."/>
        </authorList>
    </citation>
    <scope>NUCLEOTIDE SEQUENCE [MRNA]</scope>
    <source>
        <tissue>Skeletal muscle</tissue>
    </source>
</reference>
<reference key="2">
    <citation type="journal article" date="1999" name="Arch. Biochem. Biophys.">
        <title>Purification, characterization, and glutathione binding to selenoprotein W from monkey muscle.</title>
        <authorList>
            <person name="Gu Q.P."/>
            <person name="Beilstein M.A."/>
            <person name="Barofsky E."/>
            <person name="Ream W."/>
            <person name="Whanger P.D."/>
        </authorList>
    </citation>
    <scope>FUNCTION</scope>
    <scope>MASS SPECTROMETRY</scope>
    <scope>GLUTATHIONYLATION AT CYS-37</scope>
</reference>
<reference key="3">
    <citation type="journal article" date="2000" name="Mol. Cell. Biochem.">
        <title>Selenoprotein W accumulates primarily in primate skeletal muscle, heart, brain and tongue.</title>
        <authorList>
            <person name="Gu Q.P."/>
            <person name="Sun Y."/>
            <person name="Ream L.W."/>
            <person name="Whanger P.D."/>
        </authorList>
    </citation>
    <scope>TISSUE SPECIFICITY</scope>
</reference>
<keyword id="KW-0049">Antioxidant</keyword>
<keyword id="KW-0963">Cytoplasm</keyword>
<keyword id="KW-0318">Glutathionylation</keyword>
<keyword id="KW-0676">Redox-active center</keyword>
<keyword id="KW-1185">Reference proteome</keyword>
<keyword id="KW-0712">Selenocysteine</keyword>
<dbReference type="EMBL" id="U67450">
    <property type="protein sequence ID" value="AAC51666.1"/>
    <property type="molecule type" value="mRNA"/>
</dbReference>
<dbReference type="RefSeq" id="NP_001036202.1">
    <property type="nucleotide sequence ID" value="NM_001042737.2"/>
</dbReference>
<dbReference type="FunCoup" id="P63303">
    <property type="interactions" value="10"/>
</dbReference>
<dbReference type="GeneID" id="718370"/>
<dbReference type="KEGG" id="mcc:718370"/>
<dbReference type="CTD" id="6415"/>
<dbReference type="InParanoid" id="P63303"/>
<dbReference type="OrthoDB" id="444492at2759"/>
<dbReference type="Proteomes" id="UP000006718">
    <property type="component" value="Unassembled WGS sequence"/>
</dbReference>
<dbReference type="GO" id="GO:0005829">
    <property type="term" value="C:cytosol"/>
    <property type="evidence" value="ECO:0000318"/>
    <property type="project" value="GO_Central"/>
</dbReference>
<dbReference type="GO" id="GO:0005739">
    <property type="term" value="C:mitochondrion"/>
    <property type="evidence" value="ECO:0000303"/>
    <property type="project" value="UniProtKB"/>
</dbReference>
<dbReference type="GO" id="GO:0016209">
    <property type="term" value="F:antioxidant activity"/>
    <property type="evidence" value="ECO:0007669"/>
    <property type="project" value="UniProtKB-KW"/>
</dbReference>
<dbReference type="GO" id="GO:0003954">
    <property type="term" value="F:NADH dehydrogenase activity"/>
    <property type="evidence" value="ECO:0000303"/>
    <property type="project" value="UniProtKB"/>
</dbReference>
<dbReference type="GO" id="GO:0010269">
    <property type="term" value="P:response to selenium ion"/>
    <property type="evidence" value="ECO:0000318"/>
    <property type="project" value="GO_Central"/>
</dbReference>
<dbReference type="FunFam" id="3.40.30.10:FF:000158">
    <property type="entry name" value="Selenoprotein W"/>
    <property type="match status" value="1"/>
</dbReference>
<dbReference type="Gene3D" id="3.40.30.10">
    <property type="entry name" value="Glutaredoxin"/>
    <property type="match status" value="1"/>
</dbReference>
<dbReference type="InterPro" id="IPR011893">
    <property type="entry name" value="Selenoprotein_Rdx-typ"/>
</dbReference>
<dbReference type="InterPro" id="IPR051441">
    <property type="entry name" value="SelW_related"/>
</dbReference>
<dbReference type="InterPro" id="IPR036249">
    <property type="entry name" value="Thioredoxin-like_sf"/>
</dbReference>
<dbReference type="NCBIfam" id="TIGR02174">
    <property type="entry name" value="CXXU_selWTH"/>
    <property type="match status" value="1"/>
</dbReference>
<dbReference type="PANTHER" id="PTHR15124">
    <property type="entry name" value="SELENOPROTEIN W"/>
    <property type="match status" value="1"/>
</dbReference>
<dbReference type="PANTHER" id="PTHR15124:SF16">
    <property type="entry name" value="SELENOPROTEIN W"/>
    <property type="match status" value="1"/>
</dbReference>
<dbReference type="Pfam" id="PF10262">
    <property type="entry name" value="Rdx"/>
    <property type="match status" value="1"/>
</dbReference>
<dbReference type="SUPFAM" id="SSF52833">
    <property type="entry name" value="Thioredoxin-like"/>
    <property type="match status" value="1"/>
</dbReference>
<feature type="chain" id="PRO_0000097679" description="Selenoprotein W">
    <location>
        <begin position="1"/>
        <end position="87"/>
    </location>
</feature>
<feature type="non-standard amino acid" description="Selenocysteine">
    <location>
        <position position="13"/>
    </location>
</feature>
<feature type="modified residue" description="S-glutathionyl cysteine" evidence="4">
    <location>
        <position position="37"/>
    </location>
</feature>
<feature type="cross-link" description="Cysteinyl-selenocysteine (Cys-Sec); redox-active" evidence="1">
    <location>
        <begin position="10"/>
        <end position="13"/>
    </location>
</feature>
<comment type="function">
    <text evidence="1 4">Plays a role as a glutathione (GSH)-dependent antioxidant. May be involved in a redox-related process. May play a role in the myopathies of selenium deficiency (By similarity).</text>
</comment>
<comment type="subunit">
    <text evidence="1">Interacts with DPYSL2, PRDX1, YWHAB, YWHAG, HSP70 and HSP90.</text>
</comment>
<comment type="subcellular location">
    <subcellularLocation>
        <location>Cytoplasm</location>
    </subcellularLocation>
</comment>
<comment type="tissue specificity">
    <text evidence="3">Highest levels detected in skeletal muscle, tongue, heart and brain. Expressed at significantly higher levels in female skeletal muscle than in male and at slightly higher levels in female cardiac muscle than in male (at protein level). Also detected at low levels in liver.</text>
</comment>
<comment type="mass spectrometry">
    <text>With bound glutathione. Major form in muscle.</text>
</comment>
<comment type="mass spectrometry">
    <text>With an undetermined modification.</text>
</comment>
<comment type="mass spectrometry">
    <text>Without bound glutathione or undetermined modification.</text>
</comment>
<comment type="similarity">
    <text evidence="6">Belongs to the SelWTH family. Selenoprotein W subfamily.</text>
</comment>